<organism>
    <name type="scientific">Pseudomonas fluorescens (strain SBW25)</name>
    <dbReference type="NCBI Taxonomy" id="216595"/>
    <lineage>
        <taxon>Bacteria</taxon>
        <taxon>Pseudomonadati</taxon>
        <taxon>Pseudomonadota</taxon>
        <taxon>Gammaproteobacteria</taxon>
        <taxon>Pseudomonadales</taxon>
        <taxon>Pseudomonadaceae</taxon>
        <taxon>Pseudomonas</taxon>
    </lineage>
</organism>
<gene>
    <name evidence="1" type="primary">queF</name>
    <name type="ordered locus">PFLU_1578</name>
</gene>
<protein>
    <recommendedName>
        <fullName evidence="1">NADPH-dependent 7-cyano-7-deazaguanine reductase</fullName>
        <ecNumber evidence="1">1.7.1.13</ecNumber>
    </recommendedName>
    <alternativeName>
        <fullName evidence="1">7-cyano-7-carbaguanine reductase</fullName>
    </alternativeName>
    <alternativeName>
        <fullName evidence="1">NADPH-dependent nitrile oxidoreductase</fullName>
    </alternativeName>
    <alternativeName>
        <fullName evidence="1">PreQ(0) reductase</fullName>
    </alternativeName>
</protein>
<sequence length="276" mass="30827">MHPAAEHSPLGKSSEYISTYTPSLLFPIPRAAKWAELGLSAETLPYKGVDFWNCFELSWLLPSGKPVVAIGEFSIPADSPNIIESKSFKLYLNSLNQTAFADTASLEATLRTDLSAAAGKPVTVRIRTLAESEAEGVMALPGVCIDDLDISVSNYEHPRPELLRCDDARVVEESVHSHLLKSNCPVTSQPDWGSVVVEYRGHALDHASLLEYIVSFRQHSDFHEQCVERIFLDLQRLLKPEKLTVYARYVRRGGLDINPYRSTEDVAFQNVRLARQ</sequence>
<evidence type="ECO:0000255" key="1">
    <source>
        <dbReference type="HAMAP-Rule" id="MF_00817"/>
    </source>
</evidence>
<name>QUEF_PSEFS</name>
<keyword id="KW-0963">Cytoplasm</keyword>
<keyword id="KW-0521">NADP</keyword>
<keyword id="KW-0560">Oxidoreductase</keyword>
<keyword id="KW-0671">Queuosine biosynthesis</keyword>
<feature type="chain" id="PRO_1000213073" description="NADPH-dependent 7-cyano-7-deazaguanine reductase">
    <location>
        <begin position="1"/>
        <end position="276"/>
    </location>
</feature>
<feature type="active site" description="Thioimide intermediate" evidence="1">
    <location>
        <position position="184"/>
    </location>
</feature>
<feature type="active site" description="Proton donor" evidence="1">
    <location>
        <position position="191"/>
    </location>
</feature>
<feature type="binding site" evidence="1">
    <location>
        <begin position="83"/>
        <end position="85"/>
    </location>
    <ligand>
        <name>substrate</name>
    </ligand>
</feature>
<feature type="binding site" evidence="1">
    <location>
        <begin position="85"/>
        <end position="86"/>
    </location>
    <ligand>
        <name>NADPH</name>
        <dbReference type="ChEBI" id="CHEBI:57783"/>
    </ligand>
</feature>
<feature type="binding site" evidence="1">
    <location>
        <begin position="223"/>
        <end position="224"/>
    </location>
    <ligand>
        <name>substrate</name>
    </ligand>
</feature>
<feature type="binding site" evidence="1">
    <location>
        <begin position="252"/>
        <end position="253"/>
    </location>
    <ligand>
        <name>NADPH</name>
        <dbReference type="ChEBI" id="CHEBI:57783"/>
    </ligand>
</feature>
<dbReference type="EC" id="1.7.1.13" evidence="1"/>
<dbReference type="EMBL" id="AM181176">
    <property type="protein sequence ID" value="CAY47826.1"/>
    <property type="molecule type" value="Genomic_DNA"/>
</dbReference>
<dbReference type="RefSeq" id="WP_012722866.1">
    <property type="nucleotide sequence ID" value="NC_012660.1"/>
</dbReference>
<dbReference type="SMR" id="C3K5H2"/>
<dbReference type="STRING" id="294.SRM1_03764"/>
<dbReference type="GeneID" id="93463188"/>
<dbReference type="eggNOG" id="COG0780">
    <property type="taxonomic scope" value="Bacteria"/>
</dbReference>
<dbReference type="eggNOG" id="COG2904">
    <property type="taxonomic scope" value="Bacteria"/>
</dbReference>
<dbReference type="HOGENOM" id="CLU_054738_0_0_6"/>
<dbReference type="OrthoDB" id="9789995at2"/>
<dbReference type="UniPathway" id="UPA00392"/>
<dbReference type="GO" id="GO:0005737">
    <property type="term" value="C:cytoplasm"/>
    <property type="evidence" value="ECO:0007669"/>
    <property type="project" value="UniProtKB-SubCell"/>
</dbReference>
<dbReference type="GO" id="GO:0033739">
    <property type="term" value="F:preQ1 synthase activity"/>
    <property type="evidence" value="ECO:0007669"/>
    <property type="project" value="UniProtKB-UniRule"/>
</dbReference>
<dbReference type="GO" id="GO:0008616">
    <property type="term" value="P:queuosine biosynthetic process"/>
    <property type="evidence" value="ECO:0007669"/>
    <property type="project" value="UniProtKB-UniRule"/>
</dbReference>
<dbReference type="GO" id="GO:0006400">
    <property type="term" value="P:tRNA modification"/>
    <property type="evidence" value="ECO:0007669"/>
    <property type="project" value="UniProtKB-UniRule"/>
</dbReference>
<dbReference type="Gene3D" id="3.30.1130.10">
    <property type="match status" value="2"/>
</dbReference>
<dbReference type="HAMAP" id="MF_00817">
    <property type="entry name" value="QueF_type2"/>
    <property type="match status" value="1"/>
</dbReference>
<dbReference type="InterPro" id="IPR043133">
    <property type="entry name" value="GTP-CH-I_C/QueF"/>
</dbReference>
<dbReference type="InterPro" id="IPR050084">
    <property type="entry name" value="NADPH_dep_7-cyano-7-deazaG_red"/>
</dbReference>
<dbReference type="InterPro" id="IPR029500">
    <property type="entry name" value="QueF"/>
</dbReference>
<dbReference type="InterPro" id="IPR029139">
    <property type="entry name" value="QueF_N"/>
</dbReference>
<dbReference type="InterPro" id="IPR016428">
    <property type="entry name" value="QueF_type2"/>
</dbReference>
<dbReference type="NCBIfam" id="TIGR03138">
    <property type="entry name" value="QueF"/>
    <property type="match status" value="1"/>
</dbReference>
<dbReference type="PANTHER" id="PTHR34354">
    <property type="entry name" value="NADPH-DEPENDENT 7-CYANO-7-DEAZAGUANINE REDUCTASE"/>
    <property type="match status" value="1"/>
</dbReference>
<dbReference type="PANTHER" id="PTHR34354:SF1">
    <property type="entry name" value="NADPH-DEPENDENT 7-CYANO-7-DEAZAGUANINE REDUCTASE"/>
    <property type="match status" value="1"/>
</dbReference>
<dbReference type="Pfam" id="PF14489">
    <property type="entry name" value="QueF"/>
    <property type="match status" value="1"/>
</dbReference>
<dbReference type="Pfam" id="PF14819">
    <property type="entry name" value="QueF_N"/>
    <property type="match status" value="1"/>
</dbReference>
<dbReference type="PIRSF" id="PIRSF004750">
    <property type="entry name" value="Nitrile_oxidored_YqcD_prd"/>
    <property type="match status" value="1"/>
</dbReference>
<dbReference type="SUPFAM" id="SSF55620">
    <property type="entry name" value="Tetrahydrobiopterin biosynthesis enzymes-like"/>
    <property type="match status" value="1"/>
</dbReference>
<accession>C3K5H2</accession>
<reference key="1">
    <citation type="journal article" date="2009" name="Genome Biol.">
        <title>Genomic and genetic analyses of diversity and plant interactions of Pseudomonas fluorescens.</title>
        <authorList>
            <person name="Silby M.W."/>
            <person name="Cerdeno-Tarraga A.M."/>
            <person name="Vernikos G.S."/>
            <person name="Giddens S.R."/>
            <person name="Jackson R.W."/>
            <person name="Preston G.M."/>
            <person name="Zhang X.-X."/>
            <person name="Moon C.D."/>
            <person name="Gehrig S.M."/>
            <person name="Godfrey S.A.C."/>
            <person name="Knight C.G."/>
            <person name="Malone J.G."/>
            <person name="Robinson Z."/>
            <person name="Spiers A.J."/>
            <person name="Harris S."/>
            <person name="Challis G.L."/>
            <person name="Yaxley A.M."/>
            <person name="Harris D."/>
            <person name="Seeger K."/>
            <person name="Murphy L."/>
            <person name="Rutter S."/>
            <person name="Squares R."/>
            <person name="Quail M.A."/>
            <person name="Saunders E."/>
            <person name="Mavromatis K."/>
            <person name="Brettin T.S."/>
            <person name="Bentley S.D."/>
            <person name="Hothersall J."/>
            <person name="Stephens E."/>
            <person name="Thomas C.M."/>
            <person name="Parkhill J."/>
            <person name="Levy S.B."/>
            <person name="Rainey P.B."/>
            <person name="Thomson N.R."/>
        </authorList>
    </citation>
    <scope>NUCLEOTIDE SEQUENCE [LARGE SCALE GENOMIC DNA]</scope>
    <source>
        <strain>SBW25</strain>
    </source>
</reference>
<comment type="function">
    <text evidence="1">Catalyzes the NADPH-dependent reduction of 7-cyano-7-deazaguanine (preQ0) to 7-aminomethyl-7-deazaguanine (preQ1).</text>
</comment>
<comment type="catalytic activity">
    <reaction evidence="1">
        <text>7-aminomethyl-7-carbaguanine + 2 NADP(+) = 7-cyano-7-deazaguanine + 2 NADPH + 3 H(+)</text>
        <dbReference type="Rhea" id="RHEA:13409"/>
        <dbReference type="ChEBI" id="CHEBI:15378"/>
        <dbReference type="ChEBI" id="CHEBI:45075"/>
        <dbReference type="ChEBI" id="CHEBI:57783"/>
        <dbReference type="ChEBI" id="CHEBI:58349"/>
        <dbReference type="ChEBI" id="CHEBI:58703"/>
        <dbReference type="EC" id="1.7.1.13"/>
    </reaction>
</comment>
<comment type="pathway">
    <text evidence="1">tRNA modification; tRNA-queuosine biosynthesis.</text>
</comment>
<comment type="subunit">
    <text evidence="1">Homodimer.</text>
</comment>
<comment type="subcellular location">
    <subcellularLocation>
        <location evidence="1">Cytoplasm</location>
    </subcellularLocation>
</comment>
<comment type="similarity">
    <text evidence="1">Belongs to the GTP cyclohydrolase I family. QueF type 2 subfamily.</text>
</comment>
<proteinExistence type="inferred from homology"/>